<comment type="function">
    <text evidence="2 8">Transcription activator that binds to the secondary wall NAC binding element (SNBE), 5'-(T/A)NN(C/T)(T/C/G)TNNNNNNNA(A/C)GN(A/C/T)(A/T)-3', in the promoter of target genes (By similarity). Involved in xylem formation by promoting the expression of secondary wall-associated transcription factors and of genes involved in secondary wall biosynthesis and programmed cell death, genes driven by the secondary wall NAC binding element (SNBE). Triggers thickening of secondary walls (PubMed:25148240).</text>
</comment>
<comment type="subunit">
    <text evidence="7">Interacts with NAC030/VND7.</text>
</comment>
<comment type="subcellular location">
    <subcellularLocation>
        <location evidence="1 3">Nucleus</location>
    </subcellularLocation>
</comment>
<comment type="tissue specificity">
    <text evidence="5 6 7 8">Detected in root protoxylem and metaxylem poles and in vessels of protoxylems, outermost metaxylems, inner metaxylems, shoots and hypocotyls. Expressed in roots, hypocotyls, cotyledons and leaves (PubMed:18445131). Present in developing xylems (PubMed:16103214, PubMed:17565617). Present in root developing xylems (PubMed:16103214). Specifically expressed in vessels but not in interfascicular fibers in stems (PubMed:25148240).</text>
</comment>
<comment type="developmental stage">
    <text evidence="5 8">Up-regulated during xylem vessel element formation. Expressed preferentially in procambial cells adjacent to root meristem.</text>
</comment>
<comment type="domain">
    <text evidence="3">The NAC domain includes a DNA binding domain and a dimerization domain.</text>
</comment>
<comment type="disruption phenotype">
    <text evidence="8">Reduced secondary wall thickening in vessels and collapsed vessel.</text>
</comment>
<comment type="similarity">
    <text evidence="11">Belongs to the plant vascular related NAC-domain protein family.</text>
</comment>
<feature type="chain" id="PRO_0000433124" description="NAC domain-containing protein 105">
    <location>
        <begin position="1"/>
        <end position="292"/>
    </location>
</feature>
<feature type="domain" description="NAC" evidence="3">
    <location>
        <begin position="12"/>
        <end position="162"/>
    </location>
</feature>
<feature type="DNA-binding region" evidence="3">
    <location>
        <begin position="112"/>
        <end position="168"/>
    </location>
</feature>
<feature type="region of interest" description="Disordered" evidence="4">
    <location>
        <begin position="237"/>
        <end position="269"/>
    </location>
</feature>
<feature type="compositionally biased region" description="Polar residues" evidence="4">
    <location>
        <begin position="237"/>
        <end position="259"/>
    </location>
</feature>
<feature type="compositionally biased region" description="Basic and acidic residues" evidence="4">
    <location>
        <begin position="260"/>
        <end position="269"/>
    </location>
</feature>
<organism evidence="14">
    <name type="scientific">Arabidopsis thaliana</name>
    <name type="common">Mouse-ear cress</name>
    <dbReference type="NCBI Taxonomy" id="3702"/>
    <lineage>
        <taxon>Eukaryota</taxon>
        <taxon>Viridiplantae</taxon>
        <taxon>Streptophyta</taxon>
        <taxon>Embryophyta</taxon>
        <taxon>Tracheophyta</taxon>
        <taxon>Spermatophyta</taxon>
        <taxon>Magnoliopsida</taxon>
        <taxon>eudicotyledons</taxon>
        <taxon>Gunneridae</taxon>
        <taxon>Pentapetalae</taxon>
        <taxon>rosids</taxon>
        <taxon>malvids</taxon>
        <taxon>Brassicales</taxon>
        <taxon>Brassicaceae</taxon>
        <taxon>Camelineae</taxon>
        <taxon>Arabidopsis</taxon>
    </lineage>
</organism>
<keyword id="KW-0010">Activator</keyword>
<keyword id="KW-0961">Cell wall biogenesis/degradation</keyword>
<keyword id="KW-0217">Developmental protein</keyword>
<keyword id="KW-0238">DNA-binding</keyword>
<keyword id="KW-0539">Nucleus</keyword>
<keyword id="KW-1185">Reference proteome</keyword>
<keyword id="KW-0804">Transcription</keyword>
<keyword id="KW-0805">Transcription regulation</keyword>
<evidence type="ECO:0000250" key="1">
    <source>
        <dbReference type="UniProtKB" id="Q9C8W9"/>
    </source>
</evidence>
<evidence type="ECO:0000250" key="2">
    <source>
        <dbReference type="UniProtKB" id="Q9LVA1"/>
    </source>
</evidence>
<evidence type="ECO:0000255" key="3">
    <source>
        <dbReference type="PROSITE-ProRule" id="PRU00353"/>
    </source>
</evidence>
<evidence type="ECO:0000256" key="4">
    <source>
        <dbReference type="SAM" id="MobiDB-lite"/>
    </source>
</evidence>
<evidence type="ECO:0000269" key="5">
    <source>
    </source>
</evidence>
<evidence type="ECO:0000269" key="6">
    <source>
    </source>
</evidence>
<evidence type="ECO:0000269" key="7">
    <source>
    </source>
</evidence>
<evidence type="ECO:0000269" key="8">
    <source>
    </source>
</evidence>
<evidence type="ECO:0000303" key="9">
    <source>
    </source>
</evidence>
<evidence type="ECO:0000303" key="10">
    <source>
    </source>
</evidence>
<evidence type="ECO:0000305" key="11"/>
<evidence type="ECO:0000312" key="12">
    <source>
        <dbReference type="Araport" id="AT5G66300"/>
    </source>
</evidence>
<evidence type="ECO:0000312" key="13">
    <source>
        <dbReference type="EMBL" id="BAB10709.1"/>
    </source>
</evidence>
<evidence type="ECO:0000312" key="14">
    <source>
        <dbReference type="Proteomes" id="UP000006548"/>
    </source>
</evidence>
<gene>
    <name evidence="9" type="primary">NAC105</name>
    <name evidence="10" type="synonym">VND3</name>
    <name evidence="12" type="ordered locus">At5g66300</name>
    <name evidence="13" type="ORF">K1L20.8</name>
</gene>
<proteinExistence type="evidence at protein level"/>
<name>NC105_ARATH</name>
<dbReference type="EMBL" id="AB022211">
    <property type="protein sequence ID" value="BAB10709.1"/>
    <property type="molecule type" value="Genomic_DNA"/>
</dbReference>
<dbReference type="EMBL" id="CP002688">
    <property type="protein sequence ID" value="AED98196.1"/>
    <property type="molecule type" value="Genomic_DNA"/>
</dbReference>
<dbReference type="EMBL" id="BT015824">
    <property type="protein sequence ID" value="AAU94387.1"/>
    <property type="molecule type" value="mRNA"/>
</dbReference>
<dbReference type="EMBL" id="BT020216">
    <property type="protein sequence ID" value="AAV59282.1"/>
    <property type="molecule type" value="mRNA"/>
</dbReference>
<dbReference type="RefSeq" id="NP_201431.1">
    <property type="nucleotide sequence ID" value="NM_126028.3"/>
</dbReference>
<dbReference type="SMR" id="Q9FH59"/>
<dbReference type="FunCoup" id="Q9FH59">
    <property type="interactions" value="1"/>
</dbReference>
<dbReference type="IntAct" id="Q9FH59">
    <property type="interactions" value="8"/>
</dbReference>
<dbReference type="STRING" id="3702.Q9FH59"/>
<dbReference type="PaxDb" id="3702-AT5G66300.1"/>
<dbReference type="DNASU" id="836762"/>
<dbReference type="EnsemblPlants" id="AT5G66300.1">
    <property type="protein sequence ID" value="AT5G66300.1"/>
    <property type="gene ID" value="AT5G66300"/>
</dbReference>
<dbReference type="GeneID" id="836762"/>
<dbReference type="Gramene" id="AT5G66300.1">
    <property type="protein sequence ID" value="AT5G66300.1"/>
    <property type="gene ID" value="AT5G66300"/>
</dbReference>
<dbReference type="KEGG" id="ath:AT5G66300"/>
<dbReference type="Araport" id="AT5G66300"/>
<dbReference type="TAIR" id="AT5G66300">
    <property type="gene designation" value="NAC105"/>
</dbReference>
<dbReference type="eggNOG" id="ENOG502QQGU">
    <property type="taxonomic scope" value="Eukaryota"/>
</dbReference>
<dbReference type="HOGENOM" id="CLU_035664_1_2_1"/>
<dbReference type="InParanoid" id="Q9FH59"/>
<dbReference type="OMA" id="WDSNCFL"/>
<dbReference type="OrthoDB" id="1922833at2759"/>
<dbReference type="PhylomeDB" id="Q9FH59"/>
<dbReference type="PRO" id="PR:Q9FH59"/>
<dbReference type="Proteomes" id="UP000006548">
    <property type="component" value="Chromosome 5"/>
</dbReference>
<dbReference type="ExpressionAtlas" id="Q9FH59">
    <property type="expression patterns" value="baseline and differential"/>
</dbReference>
<dbReference type="GO" id="GO:0005634">
    <property type="term" value="C:nucleus"/>
    <property type="evidence" value="ECO:0007669"/>
    <property type="project" value="UniProtKB-SubCell"/>
</dbReference>
<dbReference type="GO" id="GO:0003700">
    <property type="term" value="F:DNA-binding transcription factor activity"/>
    <property type="evidence" value="ECO:0000250"/>
    <property type="project" value="UniProtKB"/>
</dbReference>
<dbReference type="GO" id="GO:0043565">
    <property type="term" value="F:sequence-specific DNA binding"/>
    <property type="evidence" value="ECO:0000250"/>
    <property type="project" value="UniProtKB"/>
</dbReference>
<dbReference type="GO" id="GO:0000976">
    <property type="term" value="F:transcription cis-regulatory region binding"/>
    <property type="evidence" value="ECO:0000353"/>
    <property type="project" value="TAIR"/>
</dbReference>
<dbReference type="GO" id="GO:0071555">
    <property type="term" value="P:cell wall organization"/>
    <property type="evidence" value="ECO:0007669"/>
    <property type="project" value="UniProtKB-KW"/>
</dbReference>
<dbReference type="GO" id="GO:1901348">
    <property type="term" value="P:positive regulation of secondary cell wall biogenesis"/>
    <property type="evidence" value="ECO:0000315"/>
    <property type="project" value="TAIR"/>
</dbReference>
<dbReference type="GO" id="GO:0006355">
    <property type="term" value="P:regulation of DNA-templated transcription"/>
    <property type="evidence" value="ECO:0000315"/>
    <property type="project" value="TAIR"/>
</dbReference>
<dbReference type="GO" id="GO:0048759">
    <property type="term" value="P:xylem vessel member cell differentiation"/>
    <property type="evidence" value="ECO:0000315"/>
    <property type="project" value="TAIR"/>
</dbReference>
<dbReference type="FunFam" id="2.170.150.80:FF:000003">
    <property type="entry name" value="NAC domain-containing protein"/>
    <property type="match status" value="1"/>
</dbReference>
<dbReference type="Gene3D" id="2.170.150.80">
    <property type="entry name" value="NAC domain"/>
    <property type="match status" value="1"/>
</dbReference>
<dbReference type="InterPro" id="IPR003441">
    <property type="entry name" value="NAC-dom"/>
</dbReference>
<dbReference type="InterPro" id="IPR036093">
    <property type="entry name" value="NAC_dom_sf"/>
</dbReference>
<dbReference type="PANTHER" id="PTHR31744:SF236">
    <property type="entry name" value="NAC DOMAIN-CONTAINING PROTEIN 105"/>
    <property type="match status" value="1"/>
</dbReference>
<dbReference type="PANTHER" id="PTHR31744">
    <property type="entry name" value="PROTEIN CUP-SHAPED COTYLEDON 2-RELATED"/>
    <property type="match status" value="1"/>
</dbReference>
<dbReference type="Pfam" id="PF02365">
    <property type="entry name" value="NAM"/>
    <property type="match status" value="1"/>
</dbReference>
<dbReference type="SUPFAM" id="SSF101941">
    <property type="entry name" value="NAC domain"/>
    <property type="match status" value="1"/>
</dbReference>
<dbReference type="PROSITE" id="PS51005">
    <property type="entry name" value="NAC"/>
    <property type="match status" value="1"/>
</dbReference>
<reference key="1">
    <citation type="journal article" date="2000" name="DNA Res.">
        <title>Structural analysis of Arabidopsis thaliana chromosome 5. X. Sequence features of the regions of 3,076,755 bp covered by sixty P1 and TAC clones.</title>
        <authorList>
            <person name="Sato S."/>
            <person name="Nakamura Y."/>
            <person name="Kaneko T."/>
            <person name="Katoh T."/>
            <person name="Asamizu E."/>
            <person name="Kotani H."/>
            <person name="Tabata S."/>
        </authorList>
    </citation>
    <scope>NUCLEOTIDE SEQUENCE [LARGE SCALE GENOMIC DNA]</scope>
    <source>
        <strain>cv. Columbia</strain>
    </source>
</reference>
<reference key="2">
    <citation type="journal article" date="2017" name="Plant J.">
        <title>Araport11: a complete reannotation of the Arabidopsis thaliana reference genome.</title>
        <authorList>
            <person name="Cheng C.Y."/>
            <person name="Krishnakumar V."/>
            <person name="Chan A.P."/>
            <person name="Thibaud-Nissen F."/>
            <person name="Schobel S."/>
            <person name="Town C.D."/>
        </authorList>
    </citation>
    <scope>GENOME REANNOTATION</scope>
    <source>
        <strain>cv. Columbia</strain>
    </source>
</reference>
<reference key="3">
    <citation type="submission" date="2004-10" db="EMBL/GenBank/DDBJ databases">
        <title>Arabidopsis ORF clones.</title>
        <authorList>
            <person name="Kim C.J."/>
            <person name="Chen H."/>
            <person name="Cheuk R.F."/>
            <person name="Shinn P."/>
            <person name="Ecker J.R."/>
        </authorList>
    </citation>
    <scope>NUCLEOTIDE SEQUENCE [LARGE SCALE MRNA]</scope>
    <source>
        <strain>cv. Columbia</strain>
    </source>
</reference>
<reference key="4">
    <citation type="journal article" date="2003" name="DNA Res.">
        <title>Comprehensive analysis of NAC family genes in Oryza sativa and Arabidopsis thaliana.</title>
        <authorList>
            <person name="Ooka H."/>
            <person name="Satoh K."/>
            <person name="Doi K."/>
            <person name="Nagata T."/>
            <person name="Otomo Y."/>
            <person name="Murakami K."/>
            <person name="Matsubara K."/>
            <person name="Osato N."/>
            <person name="Kawai J."/>
            <person name="Carninci P."/>
            <person name="Hayashizaki Y."/>
            <person name="Suzuki K."/>
            <person name="Kojima K."/>
            <person name="Takahara Y."/>
            <person name="Yamamoto K."/>
            <person name="Kikuchi S."/>
        </authorList>
    </citation>
    <scope>GENE FAMILY</scope>
    <scope>NOMENCLATURE</scope>
</reference>
<reference key="5">
    <citation type="journal article" date="2005" name="Genes Dev.">
        <title>Transcription switches for protoxylem and metaxylem vessel formation.</title>
        <authorList>
            <person name="Kubo M."/>
            <person name="Udagawa M."/>
            <person name="Nishikubo N."/>
            <person name="Horiguchi G."/>
            <person name="Yamaguchi M."/>
            <person name="Ito J."/>
            <person name="Mimura T."/>
            <person name="Fukuda H."/>
            <person name="Demura T."/>
        </authorList>
    </citation>
    <scope>DEVELOPMENTAL STAGE</scope>
    <scope>TISSUE SPECIFICITY</scope>
    <scope>GENE FAMILY</scope>
    <scope>NOMENCLATURE</scope>
</reference>
<reference key="6">
    <citation type="journal article" date="2007" name="Plant J.">
        <title>ANAC012, a member of the plant-specific NAC transcription factor family, negatively regulates xylary fiber development in Arabidopsis thaliana.</title>
        <authorList>
            <person name="Ko J.-H."/>
            <person name="Yang S.H."/>
            <person name="Park A.H."/>
            <person name="Lerouxel O."/>
            <person name="Han K.-H."/>
        </authorList>
    </citation>
    <scope>TISSUE SPECIFICITY</scope>
</reference>
<reference key="7">
    <citation type="journal article" date="2008" name="Plant J.">
        <title>Vascular-related NAC-DOMAIN7 is involved in the differentiation of all types of xylem vessels in Arabidopsis roots and shoots.</title>
        <authorList>
            <person name="Yamaguchi M."/>
            <person name="Kubo M."/>
            <person name="Fukuda H."/>
            <person name="Demura T."/>
        </authorList>
    </citation>
    <scope>TISSUE SPECIFICITY</scope>
    <scope>INTERACTION WITH NAC030/VND7</scope>
    <source>
        <strain>cv. Columbia</strain>
    </source>
</reference>
<reference key="8">
    <citation type="journal article" date="2014" name="PLoS ONE">
        <title>Arabidopsis NAC domain proteins, VND1 to VND5, are transcriptional regulators of secondary wall biosynthesis in vessels.</title>
        <authorList>
            <person name="Zhou J."/>
            <person name="Zhong R."/>
            <person name="Ye Z.-H."/>
        </authorList>
    </citation>
    <scope>FUNCTION</scope>
    <scope>DISRUPTION PHENOTYPE</scope>
    <scope>TISSUE SPECIFICITY</scope>
    <scope>DEVELOPMENTAL STAGE</scope>
</reference>
<protein>
    <recommendedName>
        <fullName evidence="9">NAC domain-containing protein 105</fullName>
        <shortName evidence="9">ANAC105</shortName>
    </recommendedName>
    <alternativeName>
        <fullName evidence="10">Protein VASCULAR RELATED NAC-DOMAIN 3</fullName>
    </alternativeName>
</protein>
<accession>Q9FH59</accession>
<sequence>MMKVDQDYSCSIPPGFRFHPTDEELVGYYLKKKIASQRIDLDVIREIDLYKIEPWDLQERCRIGYEEQTEWYFFSHRDKKYPTGTRTNRATVAGFWKATGRDKAVYLNSKLIGMRKTLVFYRGRAPNGQKSDWIIHEYYSLESHQNSPPQEEGWVVCRAFKKRTTIPTKRRQLWDPNCLFYDDATLLEPLDKRARHNPDFTATPFKQELLSEASHVQDGDFGSMYLQCIDDDQFSQLPQLESPSLPSEITPHSTTFSENSSRKDDMSSEKRITDWRYLDKFVASQFLMSGED</sequence>